<protein>
    <recommendedName>
        <fullName>Chitinase A1</fullName>
        <ecNumber>3.2.1.14</ecNumber>
    </recommendedName>
</protein>
<feature type="signal peptide">
    <location>
        <begin position="1"/>
        <end position="41"/>
    </location>
</feature>
<feature type="chain" id="PRO_0000011905" description="Chitinase A1">
    <location>
        <begin position="42"/>
        <end position="699"/>
    </location>
</feature>
<feature type="domain" description="GH18" evidence="2">
    <location>
        <begin position="44"/>
        <end position="454"/>
    </location>
</feature>
<feature type="domain" description="Fibronectin type-III 1" evidence="1">
    <location>
        <begin position="467"/>
        <end position="553"/>
    </location>
</feature>
<feature type="domain" description="Fibronectin type-III 2" evidence="1">
    <location>
        <begin position="562"/>
        <end position="647"/>
    </location>
</feature>
<feature type="region of interest" description="Disordered" evidence="3">
    <location>
        <begin position="449"/>
        <end position="471"/>
    </location>
</feature>
<feature type="compositionally biased region" description="Low complexity" evidence="3">
    <location>
        <begin position="452"/>
        <end position="465"/>
    </location>
</feature>
<feature type="active site" description="Proton donor" evidence="2">
    <location>
        <position position="204"/>
    </location>
</feature>
<feature type="binding site" evidence="2">
    <location>
        <begin position="135"/>
        <end position="136"/>
    </location>
    <ligand>
        <name>chitin</name>
        <dbReference type="ChEBI" id="CHEBI:17029"/>
    </ligand>
</feature>
<feature type="binding site" evidence="2">
    <location>
        <begin position="162"/>
        <end position="165"/>
    </location>
    <ligand>
        <name>chitin</name>
        <dbReference type="ChEBI" id="CHEBI:17029"/>
    </ligand>
</feature>
<feature type="binding site" evidence="2">
    <location>
        <position position="205"/>
    </location>
    <ligand>
        <name>chitin</name>
        <dbReference type="ChEBI" id="CHEBI:17029"/>
    </ligand>
</feature>
<feature type="binding site" evidence="2">
    <location>
        <begin position="277"/>
        <end position="280"/>
    </location>
    <ligand>
        <name>chitin</name>
        <dbReference type="ChEBI" id="CHEBI:17029"/>
    </ligand>
</feature>
<feature type="binding site" evidence="2">
    <location>
        <position position="433"/>
    </location>
    <ligand>
        <name>chitin</name>
        <dbReference type="ChEBI" id="CHEBI:17029"/>
    </ligand>
</feature>
<feature type="mutagenesis site" description="No change in activity." evidence="4">
    <original>D</original>
    <variation>E</variation>
    <location>
        <position position="200"/>
    </location>
</feature>
<feature type="mutagenesis site" description="Decrease in activity." evidence="4">
    <original>D</original>
    <variation>N</variation>
    <location>
        <position position="200"/>
    </location>
</feature>
<feature type="mutagenesis site" description="Loss of activity." evidence="4">
    <original>E</original>
    <variation>D</variation>
    <variation>Q</variation>
    <location>
        <position position="204"/>
    </location>
</feature>
<feature type="helix" evidence="7">
    <location>
        <begin position="40"/>
        <end position="43"/>
    </location>
</feature>
<feature type="strand" evidence="7">
    <location>
        <begin position="45"/>
        <end position="51"/>
    </location>
</feature>
<feature type="helix" evidence="7">
    <location>
        <begin position="52"/>
        <end position="55"/>
    </location>
</feature>
<feature type="turn" evidence="7">
    <location>
        <begin position="56"/>
        <end position="58"/>
    </location>
</feature>
<feature type="helix" evidence="7">
    <location>
        <begin position="62"/>
        <end position="64"/>
    </location>
</feature>
<feature type="helix" evidence="7">
    <location>
        <begin position="67"/>
        <end position="69"/>
    </location>
</feature>
<feature type="strand" evidence="7">
    <location>
        <begin position="71"/>
        <end position="80"/>
    </location>
</feature>
<feature type="strand" evidence="7">
    <location>
        <begin position="85"/>
        <end position="88"/>
    </location>
</feature>
<feature type="strand" evidence="7">
    <location>
        <begin position="97"/>
        <end position="100"/>
    </location>
</feature>
<feature type="strand" evidence="7">
    <location>
        <begin position="116"/>
        <end position="120"/>
    </location>
</feature>
<feature type="helix" evidence="7">
    <location>
        <begin position="121"/>
        <end position="125"/>
    </location>
</feature>
<feature type="strand" evidence="7">
    <location>
        <begin position="134"/>
        <end position="137"/>
    </location>
</feature>
<feature type="helix" evidence="7">
    <location>
        <begin position="140"/>
        <end position="151"/>
    </location>
</feature>
<feature type="strand" evidence="7">
    <location>
        <begin position="156"/>
        <end position="162"/>
    </location>
</feature>
<feature type="strand" evidence="7">
    <location>
        <begin position="164"/>
        <end position="166"/>
    </location>
</feature>
<feature type="helix" evidence="7">
    <location>
        <begin position="170"/>
        <end position="174"/>
    </location>
</feature>
<feature type="helix" evidence="7">
    <location>
        <begin position="177"/>
        <end position="194"/>
    </location>
</feature>
<feature type="strand" evidence="7">
    <location>
        <begin position="197"/>
        <end position="202"/>
    </location>
</feature>
<feature type="strand" evidence="7">
    <location>
        <begin position="206"/>
        <end position="208"/>
    </location>
</feature>
<feature type="helix" evidence="7">
    <location>
        <begin position="220"/>
        <end position="242"/>
    </location>
</feature>
<feature type="strand" evidence="7">
    <location>
        <begin position="247"/>
        <end position="252"/>
    </location>
</feature>
<feature type="helix" evidence="7">
    <location>
        <begin position="256"/>
        <end position="260"/>
    </location>
</feature>
<feature type="helix" evidence="7">
    <location>
        <begin position="264"/>
        <end position="270"/>
    </location>
</feature>
<feature type="strand" evidence="7">
    <location>
        <begin position="271"/>
        <end position="276"/>
    </location>
</feature>
<feature type="strand" evidence="7">
    <location>
        <begin position="286"/>
        <end position="288"/>
    </location>
</feature>
<feature type="helix" evidence="7">
    <location>
        <begin position="299"/>
        <end position="303"/>
    </location>
</feature>
<feature type="turn" evidence="7">
    <location>
        <begin position="307"/>
        <end position="311"/>
    </location>
</feature>
<feature type="helix" evidence="7">
    <location>
        <begin position="314"/>
        <end position="324"/>
    </location>
</feature>
<feature type="helix" evidence="7">
    <location>
        <begin position="328"/>
        <end position="330"/>
    </location>
</feature>
<feature type="strand" evidence="7">
    <location>
        <begin position="331"/>
        <end position="344"/>
    </location>
</feature>
<feature type="helix" evidence="7">
    <location>
        <begin position="348"/>
        <end position="351"/>
    </location>
</feature>
<feature type="strand" evidence="7">
    <location>
        <begin position="357"/>
        <end position="359"/>
    </location>
</feature>
<feature type="strand" evidence="7">
    <location>
        <begin position="364"/>
        <end position="366"/>
    </location>
</feature>
<feature type="strand" evidence="7">
    <location>
        <begin position="369"/>
        <end position="371"/>
    </location>
</feature>
<feature type="helix" evidence="7">
    <location>
        <begin position="372"/>
        <end position="378"/>
    </location>
</feature>
<feature type="turn" evidence="7">
    <location>
        <begin position="379"/>
        <end position="381"/>
    </location>
</feature>
<feature type="strand" evidence="7">
    <location>
        <begin position="385"/>
        <end position="390"/>
    </location>
</feature>
<feature type="turn" evidence="7">
    <location>
        <begin position="391"/>
        <end position="394"/>
    </location>
</feature>
<feature type="strand" evidence="7">
    <location>
        <begin position="395"/>
        <end position="400"/>
    </location>
</feature>
<feature type="turn" evidence="7">
    <location>
        <begin position="401"/>
        <end position="403"/>
    </location>
</feature>
<feature type="strand" evidence="7">
    <location>
        <begin position="406"/>
        <end position="408"/>
    </location>
</feature>
<feature type="helix" evidence="7">
    <location>
        <begin position="412"/>
        <end position="425"/>
    </location>
</feature>
<feature type="strand" evidence="7">
    <location>
        <begin position="429"/>
        <end position="433"/>
    </location>
</feature>
<feature type="helix" evidence="7">
    <location>
        <begin position="435"/>
        <end position="437"/>
    </location>
</feature>
<feature type="helix" evidence="7">
    <location>
        <begin position="442"/>
        <end position="450"/>
    </location>
</feature>
<feature type="strand" evidence="8">
    <location>
        <begin position="564"/>
        <end position="571"/>
    </location>
</feature>
<feature type="strand" evidence="8">
    <location>
        <begin position="576"/>
        <end position="581"/>
    </location>
</feature>
<feature type="strand" evidence="8">
    <location>
        <begin position="587"/>
        <end position="611"/>
    </location>
</feature>
<feature type="strand" evidence="8">
    <location>
        <begin position="619"/>
        <end position="628"/>
    </location>
</feature>
<feature type="strand" evidence="8">
    <location>
        <begin position="640"/>
        <end position="643"/>
    </location>
</feature>
<feature type="strand" evidence="6">
    <location>
        <begin position="658"/>
        <end position="662"/>
    </location>
</feature>
<feature type="strand" evidence="6">
    <location>
        <begin position="668"/>
        <end position="670"/>
    </location>
</feature>
<feature type="strand" evidence="6">
    <location>
        <begin position="673"/>
        <end position="675"/>
    </location>
</feature>
<feature type="strand" evidence="6">
    <location>
        <begin position="681"/>
        <end position="683"/>
    </location>
</feature>
<feature type="turn" evidence="6">
    <location>
        <begin position="693"/>
        <end position="695"/>
    </location>
</feature>
<organism>
    <name type="scientific">Niallia circulans</name>
    <name type="common">Bacillus circulans</name>
    <dbReference type="NCBI Taxonomy" id="1397"/>
    <lineage>
        <taxon>Bacteria</taxon>
        <taxon>Bacillati</taxon>
        <taxon>Bacillota</taxon>
        <taxon>Bacilli</taxon>
        <taxon>Bacillales</taxon>
        <taxon>Bacillaceae</taxon>
        <taxon>Niallia</taxon>
    </lineage>
</organism>
<gene>
    <name type="primary">chiA1</name>
</gene>
<sequence>MINLNKHTAFKKTAKFFLGLSLLLSVIVPSFALQPATAEAADSYKIVGYYPSWAAYGRNYNVADIDPTKVTHINYAFADICWNGIHGNPDPSGPNPVTWTCQNEKSQTINVPNGTIVLGDPWIDTGKTFAGDTWDQPIAGNINQLNKLKQTNPNLKTIISVGGWTWSNRFSDVAATAATREVFANSAVDFLRKYNFDGVDLDWEYPVSGGLDGNSKRPEDKQNYTLLLSKIREKLDAAGAVDGKKYLLTIASGASATYAANTELAKIAAIVDWINIMTYDFNGAWQKISAHNAPLNYDPAASAAGVPDANTFNVAAGAQGHLDAGVPAAKLVLGVPFYGRGWDGCAQAGNGQYQTCTGGSSVGTWEAGSFDFYDLEANYINKNGYTRYWNDTAKVPYLYNASNKRFISYDDAESVGYKTAYIKSKGLGGAMFWELSGDRNKTLQNKLKADLPTGGTVPPVDTTAPSVPGNARSTGVTANSVTLAWNASTDNVGVTGYNVYNGANLATSVTGTTATISGLTAGTSYTFTIKAKDAAGNLSAASNAVTVSTTAQPGGDTQAPTAPTNLASTAQTTSSITLSWTASTDNVGVTGYDVYNGTALATTVTGTTATISGLAADTSYTFTVKAKDAAGNVSAASNAVSVKTAAETTNPGVSAWQVNTAYTAGQLVTYNGKTYKCLQPHTSLAGWEPSNVPALWQLQ</sequence>
<dbReference type="EC" id="3.2.1.14"/>
<dbReference type="EMBL" id="M57601">
    <property type="protein sequence ID" value="AAA81528.1"/>
    <property type="molecule type" value="Genomic_DNA"/>
</dbReference>
<dbReference type="PIR" id="A38368">
    <property type="entry name" value="A38368"/>
</dbReference>
<dbReference type="PDB" id="1ED7">
    <property type="method" value="NMR"/>
    <property type="chains" value="A=655-699"/>
</dbReference>
<dbReference type="PDB" id="1ITX">
    <property type="method" value="X-ray"/>
    <property type="resolution" value="1.10 A"/>
    <property type="chains" value="A=33-451"/>
</dbReference>
<dbReference type="PDB" id="1K85">
    <property type="method" value="NMR"/>
    <property type="chains" value="A=559-644"/>
</dbReference>
<dbReference type="PDBsum" id="1ED7"/>
<dbReference type="PDBsum" id="1ITX"/>
<dbReference type="PDBsum" id="1K85"/>
<dbReference type="BMRB" id="P20533"/>
<dbReference type="SMR" id="P20533"/>
<dbReference type="CAZy" id="CBM12">
    <property type="family name" value="Carbohydrate-Binding Module Family 12"/>
</dbReference>
<dbReference type="CAZy" id="GH18">
    <property type="family name" value="Glycoside Hydrolase Family 18"/>
</dbReference>
<dbReference type="EvolutionaryTrace" id="P20533"/>
<dbReference type="GO" id="GO:0005576">
    <property type="term" value="C:extracellular region"/>
    <property type="evidence" value="ECO:0007669"/>
    <property type="project" value="InterPro"/>
</dbReference>
<dbReference type="GO" id="GO:0030246">
    <property type="term" value="F:carbohydrate binding"/>
    <property type="evidence" value="ECO:0007669"/>
    <property type="project" value="InterPro"/>
</dbReference>
<dbReference type="GO" id="GO:0008061">
    <property type="term" value="F:chitin binding"/>
    <property type="evidence" value="ECO:0007669"/>
    <property type="project" value="InterPro"/>
</dbReference>
<dbReference type="GO" id="GO:0008843">
    <property type="term" value="F:endochitinase activity"/>
    <property type="evidence" value="ECO:0007669"/>
    <property type="project" value="UniProtKB-EC"/>
</dbReference>
<dbReference type="GO" id="GO:0006032">
    <property type="term" value="P:chitin catabolic process"/>
    <property type="evidence" value="ECO:0007669"/>
    <property type="project" value="UniProtKB-KW"/>
</dbReference>
<dbReference type="GO" id="GO:0000272">
    <property type="term" value="P:polysaccharide catabolic process"/>
    <property type="evidence" value="ECO:0007669"/>
    <property type="project" value="UniProtKB-KW"/>
</dbReference>
<dbReference type="CDD" id="cd12214">
    <property type="entry name" value="ChiA1_BD"/>
    <property type="match status" value="1"/>
</dbReference>
<dbReference type="CDD" id="cd00063">
    <property type="entry name" value="FN3"/>
    <property type="match status" value="2"/>
</dbReference>
<dbReference type="CDD" id="cd06548">
    <property type="entry name" value="GH18_chitinase"/>
    <property type="match status" value="1"/>
</dbReference>
<dbReference type="FunFam" id="2.60.40.10:FF:001114">
    <property type="entry name" value="Chitinase A1"/>
    <property type="match status" value="1"/>
</dbReference>
<dbReference type="FunFam" id="3.20.20.80:FF:000153">
    <property type="entry name" value="Chitinase A1"/>
    <property type="match status" value="1"/>
</dbReference>
<dbReference type="Gene3D" id="3.10.50.10">
    <property type="match status" value="1"/>
</dbReference>
<dbReference type="Gene3D" id="2.10.10.20">
    <property type="entry name" value="Carbohydrate-binding module superfamily 5/12"/>
    <property type="match status" value="1"/>
</dbReference>
<dbReference type="Gene3D" id="3.20.20.80">
    <property type="entry name" value="Glycosidases"/>
    <property type="match status" value="1"/>
</dbReference>
<dbReference type="Gene3D" id="2.60.40.10">
    <property type="entry name" value="Immunoglobulins"/>
    <property type="match status" value="2"/>
</dbReference>
<dbReference type="InterPro" id="IPR003610">
    <property type="entry name" value="CBM5/12"/>
</dbReference>
<dbReference type="InterPro" id="IPR036573">
    <property type="entry name" value="CBM_sf_5/12"/>
</dbReference>
<dbReference type="InterPro" id="IPR011583">
    <property type="entry name" value="Chitinase_II/V-like_cat"/>
</dbReference>
<dbReference type="InterPro" id="IPR029070">
    <property type="entry name" value="Chitinase_insertion_sf"/>
</dbReference>
<dbReference type="InterPro" id="IPR003961">
    <property type="entry name" value="FN3_dom"/>
</dbReference>
<dbReference type="InterPro" id="IPR036116">
    <property type="entry name" value="FN3_sf"/>
</dbReference>
<dbReference type="InterPro" id="IPR001223">
    <property type="entry name" value="Glyco_hydro18_cat"/>
</dbReference>
<dbReference type="InterPro" id="IPR001579">
    <property type="entry name" value="Glyco_hydro_18_chit_AS"/>
</dbReference>
<dbReference type="InterPro" id="IPR017853">
    <property type="entry name" value="Glycoside_hydrolase_SF"/>
</dbReference>
<dbReference type="InterPro" id="IPR050314">
    <property type="entry name" value="Glycosyl_Hydrlase_18"/>
</dbReference>
<dbReference type="InterPro" id="IPR013783">
    <property type="entry name" value="Ig-like_fold"/>
</dbReference>
<dbReference type="PANTHER" id="PTHR11177">
    <property type="entry name" value="CHITINASE"/>
    <property type="match status" value="1"/>
</dbReference>
<dbReference type="PANTHER" id="PTHR11177:SF317">
    <property type="entry name" value="CHITINASE 12-RELATED"/>
    <property type="match status" value="1"/>
</dbReference>
<dbReference type="Pfam" id="PF02839">
    <property type="entry name" value="CBM_5_12"/>
    <property type="match status" value="1"/>
</dbReference>
<dbReference type="Pfam" id="PF00041">
    <property type="entry name" value="fn3"/>
    <property type="match status" value="2"/>
</dbReference>
<dbReference type="Pfam" id="PF00704">
    <property type="entry name" value="Glyco_hydro_18"/>
    <property type="match status" value="1"/>
</dbReference>
<dbReference type="SMART" id="SM00495">
    <property type="entry name" value="ChtBD3"/>
    <property type="match status" value="1"/>
</dbReference>
<dbReference type="SMART" id="SM00060">
    <property type="entry name" value="FN3"/>
    <property type="match status" value="2"/>
</dbReference>
<dbReference type="SMART" id="SM00636">
    <property type="entry name" value="Glyco_18"/>
    <property type="match status" value="1"/>
</dbReference>
<dbReference type="SUPFAM" id="SSF51445">
    <property type="entry name" value="(Trans)glycosidases"/>
    <property type="match status" value="1"/>
</dbReference>
<dbReference type="SUPFAM" id="SSF51055">
    <property type="entry name" value="Carbohydrate binding domain"/>
    <property type="match status" value="1"/>
</dbReference>
<dbReference type="SUPFAM" id="SSF54556">
    <property type="entry name" value="Chitinase insertion domain"/>
    <property type="match status" value="1"/>
</dbReference>
<dbReference type="SUPFAM" id="SSF49265">
    <property type="entry name" value="Fibronectin type III"/>
    <property type="match status" value="1"/>
</dbReference>
<dbReference type="PROSITE" id="PS50853">
    <property type="entry name" value="FN3"/>
    <property type="match status" value="2"/>
</dbReference>
<dbReference type="PROSITE" id="PS01095">
    <property type="entry name" value="GH18_1"/>
    <property type="match status" value="1"/>
</dbReference>
<dbReference type="PROSITE" id="PS51910">
    <property type="entry name" value="GH18_2"/>
    <property type="match status" value="1"/>
</dbReference>
<keyword id="KW-0002">3D-structure</keyword>
<keyword id="KW-0119">Carbohydrate metabolism</keyword>
<keyword id="KW-0146">Chitin degradation</keyword>
<keyword id="KW-0326">Glycosidase</keyword>
<keyword id="KW-0378">Hydrolase</keyword>
<keyword id="KW-0624">Polysaccharide degradation</keyword>
<keyword id="KW-0677">Repeat</keyword>
<keyword id="KW-0732">Signal</keyword>
<comment type="catalytic activity">
    <reaction>
        <text>Random endo-hydrolysis of N-acetyl-beta-D-glucosaminide (1-&gt;4)-beta-linkages in chitin and chitodextrins.</text>
        <dbReference type="EC" id="3.2.1.14"/>
    </reaction>
</comment>
<comment type="similarity">
    <text evidence="5">Belongs to the glycosyl hydrolase 18 family. Chitinase class II subfamily.</text>
</comment>
<accession>P20533</accession>
<reference key="1">
    <citation type="journal article" date="1990" name="J. Biol. Chem.">
        <title>Gene cloning of chitinase A1 from Bacillus circulans WL-12 revealed its evolutionary relationship to Serratia chitinase and to the type III homology units of fibronectin.</title>
        <authorList>
            <person name="Watanabe T."/>
            <person name="Suzuki K."/>
            <person name="Oyanagi W."/>
            <person name="Ohnishi K."/>
            <person name="Tanaka H."/>
        </authorList>
    </citation>
    <scope>NUCLEOTIDE SEQUENCE [GENOMIC DNA]</scope>
    <source>
        <strain>WL-12</strain>
    </source>
</reference>
<reference key="2">
    <citation type="journal article" date="1993" name="J. Biol. Chem.">
        <title>Identification of glutamic acid 204 and aspartic acid 200 in chitinase A1 of Bacillus circulans WL-12 as essential residues for chitinase activity.</title>
        <authorList>
            <person name="Watanabe T."/>
            <person name="Kohori K."/>
            <person name="Miyashita K."/>
            <person name="Fujii T."/>
            <person name="Sakai H."/>
            <person name="Uchida M."/>
            <person name="Tanaka H."/>
        </authorList>
    </citation>
    <scope>MUTAGENESIS</scope>
    <source>
        <strain>WL-12</strain>
    </source>
</reference>
<evidence type="ECO:0000255" key="1">
    <source>
        <dbReference type="PROSITE-ProRule" id="PRU00316"/>
    </source>
</evidence>
<evidence type="ECO:0000255" key="2">
    <source>
        <dbReference type="PROSITE-ProRule" id="PRU01258"/>
    </source>
</evidence>
<evidence type="ECO:0000256" key="3">
    <source>
        <dbReference type="SAM" id="MobiDB-lite"/>
    </source>
</evidence>
<evidence type="ECO:0000269" key="4">
    <source>
    </source>
</evidence>
<evidence type="ECO:0000305" key="5"/>
<evidence type="ECO:0007829" key="6">
    <source>
        <dbReference type="PDB" id="1ED7"/>
    </source>
</evidence>
<evidence type="ECO:0007829" key="7">
    <source>
        <dbReference type="PDB" id="1ITX"/>
    </source>
</evidence>
<evidence type="ECO:0007829" key="8">
    <source>
        <dbReference type="PDB" id="1K85"/>
    </source>
</evidence>
<name>CHIA1_NIACI</name>
<proteinExistence type="evidence at protein level"/>